<accession>A7FWY7</accession>
<name>CSRA_CLOB1</name>
<gene>
    <name evidence="1" type="primary">csrA</name>
    <name type="ordered locus">CLB_2678</name>
</gene>
<organism>
    <name type="scientific">Clostridium botulinum (strain ATCC 19397 / Type A)</name>
    <dbReference type="NCBI Taxonomy" id="441770"/>
    <lineage>
        <taxon>Bacteria</taxon>
        <taxon>Bacillati</taxon>
        <taxon>Bacillota</taxon>
        <taxon>Clostridia</taxon>
        <taxon>Eubacteriales</taxon>
        <taxon>Clostridiaceae</taxon>
        <taxon>Clostridium</taxon>
    </lineage>
</organism>
<dbReference type="EMBL" id="CP000726">
    <property type="protein sequence ID" value="ABS33425.1"/>
    <property type="molecule type" value="Genomic_DNA"/>
</dbReference>
<dbReference type="RefSeq" id="WP_011987028.1">
    <property type="nucleotide sequence ID" value="NC_009697.1"/>
</dbReference>
<dbReference type="SMR" id="A7FWY7"/>
<dbReference type="GeneID" id="5184305"/>
<dbReference type="KEGG" id="cba:CLB_2678"/>
<dbReference type="HOGENOM" id="CLU_164837_0_1_9"/>
<dbReference type="GO" id="GO:0005829">
    <property type="term" value="C:cytosol"/>
    <property type="evidence" value="ECO:0007669"/>
    <property type="project" value="TreeGrafter"/>
</dbReference>
<dbReference type="GO" id="GO:0048027">
    <property type="term" value="F:mRNA 5'-UTR binding"/>
    <property type="evidence" value="ECO:0007669"/>
    <property type="project" value="UniProtKB-UniRule"/>
</dbReference>
<dbReference type="GO" id="GO:0044781">
    <property type="term" value="P:bacterial-type flagellum organization"/>
    <property type="evidence" value="ECO:0007669"/>
    <property type="project" value="UniProtKB-KW"/>
</dbReference>
<dbReference type="GO" id="GO:0006402">
    <property type="term" value="P:mRNA catabolic process"/>
    <property type="evidence" value="ECO:0007669"/>
    <property type="project" value="InterPro"/>
</dbReference>
<dbReference type="GO" id="GO:0045947">
    <property type="term" value="P:negative regulation of translational initiation"/>
    <property type="evidence" value="ECO:0007669"/>
    <property type="project" value="UniProtKB-UniRule"/>
</dbReference>
<dbReference type="GO" id="GO:1902208">
    <property type="term" value="P:regulation of bacterial-type flagellum assembly"/>
    <property type="evidence" value="ECO:0007669"/>
    <property type="project" value="UniProtKB-UniRule"/>
</dbReference>
<dbReference type="GO" id="GO:0006109">
    <property type="term" value="P:regulation of carbohydrate metabolic process"/>
    <property type="evidence" value="ECO:0007669"/>
    <property type="project" value="InterPro"/>
</dbReference>
<dbReference type="FunFam" id="2.60.40.4380:FF:000002">
    <property type="entry name" value="Translational regulator CsrA"/>
    <property type="match status" value="1"/>
</dbReference>
<dbReference type="Gene3D" id="2.60.40.4380">
    <property type="entry name" value="Translational regulator CsrA"/>
    <property type="match status" value="1"/>
</dbReference>
<dbReference type="HAMAP" id="MF_00167">
    <property type="entry name" value="CsrA"/>
    <property type="match status" value="1"/>
</dbReference>
<dbReference type="InterPro" id="IPR003751">
    <property type="entry name" value="CsrA"/>
</dbReference>
<dbReference type="InterPro" id="IPR036107">
    <property type="entry name" value="CsrA_sf"/>
</dbReference>
<dbReference type="NCBIfam" id="TIGR00202">
    <property type="entry name" value="csrA"/>
    <property type="match status" value="1"/>
</dbReference>
<dbReference type="NCBIfam" id="NF002469">
    <property type="entry name" value="PRK01712.1"/>
    <property type="match status" value="1"/>
</dbReference>
<dbReference type="PANTHER" id="PTHR34984">
    <property type="entry name" value="CARBON STORAGE REGULATOR"/>
    <property type="match status" value="1"/>
</dbReference>
<dbReference type="PANTHER" id="PTHR34984:SF1">
    <property type="entry name" value="CARBON STORAGE REGULATOR"/>
    <property type="match status" value="1"/>
</dbReference>
<dbReference type="Pfam" id="PF02599">
    <property type="entry name" value="CsrA"/>
    <property type="match status" value="1"/>
</dbReference>
<dbReference type="SUPFAM" id="SSF117130">
    <property type="entry name" value="CsrA-like"/>
    <property type="match status" value="1"/>
</dbReference>
<proteinExistence type="inferred from homology"/>
<reference key="1">
    <citation type="journal article" date="2007" name="PLoS ONE">
        <title>Analysis of the neurotoxin complex genes in Clostridium botulinum A1-A4 and B1 strains: BoNT/A3, /Ba4 and /B1 clusters are located within plasmids.</title>
        <authorList>
            <person name="Smith T.J."/>
            <person name="Hill K.K."/>
            <person name="Foley B.T."/>
            <person name="Detter J.C."/>
            <person name="Munk A.C."/>
            <person name="Bruce D.C."/>
            <person name="Doggett N.A."/>
            <person name="Smith L.A."/>
            <person name="Marks J.D."/>
            <person name="Xie G."/>
            <person name="Brettin T.S."/>
        </authorList>
    </citation>
    <scope>NUCLEOTIDE SEQUENCE [LARGE SCALE GENOMIC DNA]</scope>
    <source>
        <strain>ATCC 19397 / Type A</strain>
    </source>
</reference>
<protein>
    <recommendedName>
        <fullName evidence="1">Translational regulator CsrA</fullName>
    </recommendedName>
</protein>
<comment type="function">
    <text evidence="1">A translational regulator that binds mRNA to regulate translation initiation and/or mRNA stability. Usually binds in the 5'-UTR at or near the Shine-Dalgarno sequence preventing ribosome-binding, thus repressing translation. Its main target seems to be the major flagellin gene, while its function is anatagonized by FliW.</text>
</comment>
<comment type="subunit">
    <text evidence="1">Homodimer; the beta-strands of each monomer intercalate to form a hydrophobic core, while the alpha-helices form wings that extend away from the core.</text>
</comment>
<comment type="subcellular location">
    <subcellularLocation>
        <location evidence="1">Cytoplasm</location>
    </subcellularLocation>
</comment>
<comment type="similarity">
    <text evidence="1">Belongs to the CsrA/RsmA family.</text>
</comment>
<evidence type="ECO:0000255" key="1">
    <source>
        <dbReference type="HAMAP-Rule" id="MF_00167"/>
    </source>
</evidence>
<feature type="chain" id="PRO_1000023369" description="Translational regulator CsrA">
    <location>
        <begin position="1"/>
        <end position="72"/>
    </location>
</feature>
<sequence>MLVITRKKGESLLIGDDIEITVVKLDDGSVKLAIDAPKNLTILRKELYNEVQEENKKATNFNPSILKNIKSK</sequence>
<keyword id="KW-1005">Bacterial flagellum biogenesis</keyword>
<keyword id="KW-0963">Cytoplasm</keyword>
<keyword id="KW-0678">Repressor</keyword>
<keyword id="KW-0694">RNA-binding</keyword>
<keyword id="KW-0810">Translation regulation</keyword>